<gene>
    <name type="primary">Tfcp2l1</name>
    <name type="synonym">Crtr1</name>
    <name type="synonym">Tcfcp2l1</name>
</gene>
<dbReference type="EMBL" id="AF311309">
    <property type="protein sequence ID" value="AAK01150.1"/>
    <property type="molecule type" value="mRNA"/>
</dbReference>
<dbReference type="EMBL" id="AK143960">
    <property type="protein sequence ID" value="BAE25632.1"/>
    <property type="molecule type" value="mRNA"/>
</dbReference>
<dbReference type="EMBL" id="AC109271">
    <property type="status" value="NOT_ANNOTATED_CDS"/>
    <property type="molecule type" value="Genomic_DNA"/>
</dbReference>
<dbReference type="EMBL" id="AC109294">
    <property type="status" value="NOT_ANNOTATED_CDS"/>
    <property type="molecule type" value="Genomic_DNA"/>
</dbReference>
<dbReference type="EMBL" id="CH466520">
    <property type="protein sequence ID" value="EDL39825.1"/>
    <property type="molecule type" value="Genomic_DNA"/>
</dbReference>
<dbReference type="EMBL" id="BC116663">
    <property type="protein sequence ID" value="AAI16664.1"/>
    <property type="molecule type" value="mRNA"/>
</dbReference>
<dbReference type="CCDS" id="CCDS35691.1"/>
<dbReference type="RefSeq" id="NP_076244.2">
    <property type="nucleotide sequence ID" value="NM_023755.2"/>
</dbReference>
<dbReference type="SMR" id="Q3UNW5"/>
<dbReference type="BioGRID" id="219895">
    <property type="interactions" value="92"/>
</dbReference>
<dbReference type="FunCoup" id="Q3UNW5">
    <property type="interactions" value="293"/>
</dbReference>
<dbReference type="IntAct" id="Q3UNW5">
    <property type="interactions" value="92"/>
</dbReference>
<dbReference type="MINT" id="Q3UNW5"/>
<dbReference type="STRING" id="10090.ENSMUSP00000027629"/>
<dbReference type="iPTMnet" id="Q3UNW5"/>
<dbReference type="PhosphoSitePlus" id="Q3UNW5"/>
<dbReference type="PaxDb" id="10090-ENSMUSP00000027629"/>
<dbReference type="PeptideAtlas" id="Q3UNW5"/>
<dbReference type="ProteomicsDB" id="259013"/>
<dbReference type="Antibodypedia" id="18370">
    <property type="antibodies" value="276 antibodies from 34 providers"/>
</dbReference>
<dbReference type="DNASU" id="81879"/>
<dbReference type="Ensembl" id="ENSMUST00000027629.10">
    <property type="protein sequence ID" value="ENSMUSP00000027629.9"/>
    <property type="gene ID" value="ENSMUSG00000026380.11"/>
</dbReference>
<dbReference type="GeneID" id="81879"/>
<dbReference type="KEGG" id="mmu:81879"/>
<dbReference type="UCSC" id="uc007cil.1">
    <property type="organism name" value="mouse"/>
</dbReference>
<dbReference type="AGR" id="MGI:2444691"/>
<dbReference type="CTD" id="29842"/>
<dbReference type="MGI" id="MGI:2444691">
    <property type="gene designation" value="Tfcp2l1"/>
</dbReference>
<dbReference type="VEuPathDB" id="HostDB:ENSMUSG00000026380"/>
<dbReference type="eggNOG" id="KOG4091">
    <property type="taxonomic scope" value="Eukaryota"/>
</dbReference>
<dbReference type="GeneTree" id="ENSGT00940000159158"/>
<dbReference type="HOGENOM" id="CLU_015127_2_0_1"/>
<dbReference type="InParanoid" id="Q3UNW5"/>
<dbReference type="OMA" id="QDESCFT"/>
<dbReference type="OrthoDB" id="9996779at2759"/>
<dbReference type="PhylomeDB" id="Q3UNW5"/>
<dbReference type="TreeFam" id="TF314132"/>
<dbReference type="BioGRID-ORCS" id="81879">
    <property type="hits" value="3 hits in 78 CRISPR screens"/>
</dbReference>
<dbReference type="ChiTaRS" id="Tfcp2l1">
    <property type="organism name" value="mouse"/>
</dbReference>
<dbReference type="PRO" id="PR:Q3UNW5"/>
<dbReference type="Proteomes" id="UP000000589">
    <property type="component" value="Chromosome 1"/>
</dbReference>
<dbReference type="RNAct" id="Q3UNW5">
    <property type="molecule type" value="protein"/>
</dbReference>
<dbReference type="Bgee" id="ENSMUSG00000026380">
    <property type="expression patterns" value="Expressed in submandibular gland and 139 other cell types or tissues"/>
</dbReference>
<dbReference type="GO" id="GO:0005737">
    <property type="term" value="C:cytoplasm"/>
    <property type="evidence" value="ECO:0000314"/>
    <property type="project" value="MGI"/>
</dbReference>
<dbReference type="GO" id="GO:0016020">
    <property type="term" value="C:membrane"/>
    <property type="evidence" value="ECO:0000314"/>
    <property type="project" value="MGI"/>
</dbReference>
<dbReference type="GO" id="GO:0005634">
    <property type="term" value="C:nucleus"/>
    <property type="evidence" value="ECO:0000314"/>
    <property type="project" value="MGI"/>
</dbReference>
<dbReference type="GO" id="GO:0005667">
    <property type="term" value="C:transcription regulator complex"/>
    <property type="evidence" value="ECO:0000247"/>
    <property type="project" value="MGI"/>
</dbReference>
<dbReference type="GO" id="GO:0001227">
    <property type="term" value="F:DNA-binding transcription repressor activity, RNA polymerase II-specific"/>
    <property type="evidence" value="ECO:0000305"/>
    <property type="project" value="NTNU_SB"/>
</dbReference>
<dbReference type="GO" id="GO:0000978">
    <property type="term" value="F:RNA polymerase II cis-regulatory region sequence-specific DNA binding"/>
    <property type="evidence" value="ECO:0007669"/>
    <property type="project" value="Ensembl"/>
</dbReference>
<dbReference type="GO" id="GO:0000977">
    <property type="term" value="F:RNA polymerase II transcription regulatory region sequence-specific DNA binding"/>
    <property type="evidence" value="ECO:0000314"/>
    <property type="project" value="NTNU_SB"/>
</dbReference>
<dbReference type="GO" id="GO:0000902">
    <property type="term" value="P:cell morphogenesis"/>
    <property type="evidence" value="ECO:0000315"/>
    <property type="project" value="MGI"/>
</dbReference>
<dbReference type="GO" id="GO:0007028">
    <property type="term" value="P:cytoplasm organization"/>
    <property type="evidence" value="ECO:0000315"/>
    <property type="project" value="MGI"/>
</dbReference>
<dbReference type="GO" id="GO:0008340">
    <property type="term" value="P:determination of adult lifespan"/>
    <property type="evidence" value="ECO:0000315"/>
    <property type="project" value="MGI"/>
</dbReference>
<dbReference type="GO" id="GO:0002070">
    <property type="term" value="P:epithelial cell maturation"/>
    <property type="evidence" value="ECO:0000315"/>
    <property type="project" value="MGI"/>
</dbReference>
<dbReference type="GO" id="GO:0000122">
    <property type="term" value="P:negative regulation of transcription by RNA polymerase II"/>
    <property type="evidence" value="ECO:0000314"/>
    <property type="project" value="MGI"/>
</dbReference>
<dbReference type="GO" id="GO:0045927">
    <property type="term" value="P:positive regulation of growth"/>
    <property type="evidence" value="ECO:0000315"/>
    <property type="project" value="MGI"/>
</dbReference>
<dbReference type="GO" id="GO:0007431">
    <property type="term" value="P:salivary gland development"/>
    <property type="evidence" value="ECO:0000315"/>
    <property type="project" value="MGI"/>
</dbReference>
<dbReference type="CDD" id="cd09590">
    <property type="entry name" value="SAM_LBP9"/>
    <property type="match status" value="1"/>
</dbReference>
<dbReference type="FunFam" id="1.10.150.50:FF:000022">
    <property type="entry name" value="Transcription factor CP2 like 1"/>
    <property type="match status" value="1"/>
</dbReference>
<dbReference type="Gene3D" id="1.10.150.50">
    <property type="entry name" value="Transcription Factor, Ets-1"/>
    <property type="match status" value="1"/>
</dbReference>
<dbReference type="InterPro" id="IPR007604">
    <property type="entry name" value="CP2"/>
</dbReference>
<dbReference type="InterPro" id="IPR013761">
    <property type="entry name" value="SAM/pointed_sf"/>
</dbReference>
<dbReference type="InterPro" id="IPR041418">
    <property type="entry name" value="SAM_3"/>
</dbReference>
<dbReference type="InterPro" id="IPR040167">
    <property type="entry name" value="TF_CP2-like"/>
</dbReference>
<dbReference type="InterPro" id="IPR037598">
    <property type="entry name" value="TFCP2L1_SAM"/>
</dbReference>
<dbReference type="PANTHER" id="PTHR11037">
    <property type="entry name" value="TRANSCRIPTION FACTOR CP2"/>
    <property type="match status" value="1"/>
</dbReference>
<dbReference type="PANTHER" id="PTHR11037:SF18">
    <property type="entry name" value="TRANSCRIPTION FACTOR CP2-LIKE PROTEIN 1"/>
    <property type="match status" value="1"/>
</dbReference>
<dbReference type="Pfam" id="PF04516">
    <property type="entry name" value="CP2"/>
    <property type="match status" value="1"/>
</dbReference>
<dbReference type="Pfam" id="PF25416">
    <property type="entry name" value="GRHL1_C"/>
    <property type="match status" value="1"/>
</dbReference>
<dbReference type="Pfam" id="PF18016">
    <property type="entry name" value="SAM_3"/>
    <property type="match status" value="1"/>
</dbReference>
<dbReference type="SUPFAM" id="SSF47769">
    <property type="entry name" value="SAM/Pointed domain"/>
    <property type="match status" value="1"/>
</dbReference>
<dbReference type="PROSITE" id="PS51968">
    <property type="entry name" value="GRH_CP2_DB"/>
    <property type="match status" value="1"/>
</dbReference>
<feature type="chain" id="PRO_0000228007" description="Transcription factor CP2-like protein 1">
    <location>
        <begin position="1"/>
        <end position="479"/>
    </location>
</feature>
<feature type="domain" description="Grh/CP2 DB" evidence="2">
    <location>
        <begin position="43"/>
        <end position="280"/>
    </location>
</feature>
<feature type="region of interest" description="Mediate transcriptional repression">
    <location>
        <begin position="1"/>
        <end position="52"/>
    </location>
</feature>
<feature type="region of interest" description="Disordered" evidence="3">
    <location>
        <begin position="219"/>
        <end position="248"/>
    </location>
</feature>
<feature type="region of interest" description="Disordered" evidence="3">
    <location>
        <begin position="260"/>
        <end position="301"/>
    </location>
</feature>
<feature type="region of interest" description="SAM2-like domain" evidence="1">
    <location>
        <begin position="261"/>
        <end position="365"/>
    </location>
</feature>
<feature type="compositionally biased region" description="Basic and acidic residues" evidence="3">
    <location>
        <begin position="221"/>
        <end position="245"/>
    </location>
</feature>
<feature type="compositionally biased region" description="Polar residues" evidence="3">
    <location>
        <begin position="266"/>
        <end position="292"/>
    </location>
</feature>
<feature type="sequence conflict" description="In Ref. 1; AAK01150." evidence="11" ref="1">
    <original>K</original>
    <variation>R</variation>
    <location>
        <position position="60"/>
    </location>
</feature>
<feature type="sequence conflict" description="In Ref. 1; AAK01150." evidence="11" ref="1">
    <original>T</original>
    <variation>A</variation>
    <location>
        <position position="195"/>
    </location>
</feature>
<feature type="sequence conflict" description="In Ref. 1; AAK01150." evidence="11" ref="1">
    <original>SGDYSEHLHSAS</original>
    <variation>KWGLLGASTLLPA</variation>
    <location>
        <begin position="201"/>
        <end position="212"/>
    </location>
</feature>
<feature type="sequence conflict" description="In Ref. 1; AAK01150." evidence="11" ref="1">
    <original>V</original>
    <variation>G</variation>
    <location>
        <position position="217"/>
    </location>
</feature>
<feature type="sequence conflict" description="In Ref. 1; AAK01150." evidence="11" ref="1">
    <original>PKGADRKQ</original>
    <variation>AQGELIGNK</variation>
    <location>
        <begin position="220"/>
        <end position="227"/>
    </location>
</feature>
<feature type="sequence conflict" description="In Ref. 1; AAK01150." evidence="11" ref="1">
    <original>NT</original>
    <variation>TP</variation>
    <location>
        <begin position="269"/>
        <end position="270"/>
    </location>
</feature>
<feature type="sequence conflict" description="In Ref. 1; AAK01150." evidence="11" ref="1">
    <original>N</original>
    <variation>T</variation>
    <location>
        <position position="288"/>
    </location>
</feature>
<feature type="sequence conflict" description="In Ref. 1; AAK01150." evidence="11" ref="1">
    <original>N</original>
    <variation>I</variation>
    <location>
        <position position="292"/>
    </location>
</feature>
<feature type="sequence conflict" description="In Ref. 2; BAE25632." evidence="11" ref="2">
    <location>
        <position position="465"/>
    </location>
</feature>
<feature type="sequence conflict" description="In Ref. 1; AAK01150." evidence="11" ref="1">
    <original>N</original>
    <variation>S</variation>
    <location>
        <position position="468"/>
    </location>
</feature>
<reference key="1">
    <citation type="journal article" date="2001" name="J. Biol. Chem.">
        <title>CRTR-1, a developmentally regulated transcriptional repressor related to the CP2 family of transcription factors.</title>
        <authorList>
            <person name="Rodda S."/>
            <person name="Sharma S."/>
            <person name="Scherer M."/>
            <person name="Chapman G."/>
            <person name="Rathjen P."/>
        </authorList>
    </citation>
    <scope>NUCLEOTIDE SEQUENCE [MRNA]</scope>
    <scope>FUNCTION</scope>
    <scope>TISSUE SPECIFICITY</scope>
    <scope>DEVELOPMENTAL STAGE</scope>
    <source>
        <strain>129/Ola</strain>
    </source>
</reference>
<reference key="2">
    <citation type="journal article" date="2005" name="Science">
        <title>The transcriptional landscape of the mammalian genome.</title>
        <authorList>
            <person name="Carninci P."/>
            <person name="Kasukawa T."/>
            <person name="Katayama S."/>
            <person name="Gough J."/>
            <person name="Frith M.C."/>
            <person name="Maeda N."/>
            <person name="Oyama R."/>
            <person name="Ravasi T."/>
            <person name="Lenhard B."/>
            <person name="Wells C."/>
            <person name="Kodzius R."/>
            <person name="Shimokawa K."/>
            <person name="Bajic V.B."/>
            <person name="Brenner S.E."/>
            <person name="Batalov S."/>
            <person name="Forrest A.R."/>
            <person name="Zavolan M."/>
            <person name="Davis M.J."/>
            <person name="Wilming L.G."/>
            <person name="Aidinis V."/>
            <person name="Allen J.E."/>
            <person name="Ambesi-Impiombato A."/>
            <person name="Apweiler R."/>
            <person name="Aturaliya R.N."/>
            <person name="Bailey T.L."/>
            <person name="Bansal M."/>
            <person name="Baxter L."/>
            <person name="Beisel K.W."/>
            <person name="Bersano T."/>
            <person name="Bono H."/>
            <person name="Chalk A.M."/>
            <person name="Chiu K.P."/>
            <person name="Choudhary V."/>
            <person name="Christoffels A."/>
            <person name="Clutterbuck D.R."/>
            <person name="Crowe M.L."/>
            <person name="Dalla E."/>
            <person name="Dalrymple B.P."/>
            <person name="de Bono B."/>
            <person name="Della Gatta G."/>
            <person name="di Bernardo D."/>
            <person name="Down T."/>
            <person name="Engstrom P."/>
            <person name="Fagiolini M."/>
            <person name="Faulkner G."/>
            <person name="Fletcher C.F."/>
            <person name="Fukushima T."/>
            <person name="Furuno M."/>
            <person name="Futaki S."/>
            <person name="Gariboldi M."/>
            <person name="Georgii-Hemming P."/>
            <person name="Gingeras T.R."/>
            <person name="Gojobori T."/>
            <person name="Green R.E."/>
            <person name="Gustincich S."/>
            <person name="Harbers M."/>
            <person name="Hayashi Y."/>
            <person name="Hensch T.K."/>
            <person name="Hirokawa N."/>
            <person name="Hill D."/>
            <person name="Huminiecki L."/>
            <person name="Iacono M."/>
            <person name="Ikeo K."/>
            <person name="Iwama A."/>
            <person name="Ishikawa T."/>
            <person name="Jakt M."/>
            <person name="Kanapin A."/>
            <person name="Katoh M."/>
            <person name="Kawasawa Y."/>
            <person name="Kelso J."/>
            <person name="Kitamura H."/>
            <person name="Kitano H."/>
            <person name="Kollias G."/>
            <person name="Krishnan S.P."/>
            <person name="Kruger A."/>
            <person name="Kummerfeld S.K."/>
            <person name="Kurochkin I.V."/>
            <person name="Lareau L.F."/>
            <person name="Lazarevic D."/>
            <person name="Lipovich L."/>
            <person name="Liu J."/>
            <person name="Liuni S."/>
            <person name="McWilliam S."/>
            <person name="Madan Babu M."/>
            <person name="Madera M."/>
            <person name="Marchionni L."/>
            <person name="Matsuda H."/>
            <person name="Matsuzawa S."/>
            <person name="Miki H."/>
            <person name="Mignone F."/>
            <person name="Miyake S."/>
            <person name="Morris K."/>
            <person name="Mottagui-Tabar S."/>
            <person name="Mulder N."/>
            <person name="Nakano N."/>
            <person name="Nakauchi H."/>
            <person name="Ng P."/>
            <person name="Nilsson R."/>
            <person name="Nishiguchi S."/>
            <person name="Nishikawa S."/>
            <person name="Nori F."/>
            <person name="Ohara O."/>
            <person name="Okazaki Y."/>
            <person name="Orlando V."/>
            <person name="Pang K.C."/>
            <person name="Pavan W.J."/>
            <person name="Pavesi G."/>
            <person name="Pesole G."/>
            <person name="Petrovsky N."/>
            <person name="Piazza S."/>
            <person name="Reed J."/>
            <person name="Reid J.F."/>
            <person name="Ring B.Z."/>
            <person name="Ringwald M."/>
            <person name="Rost B."/>
            <person name="Ruan Y."/>
            <person name="Salzberg S.L."/>
            <person name="Sandelin A."/>
            <person name="Schneider C."/>
            <person name="Schoenbach C."/>
            <person name="Sekiguchi K."/>
            <person name="Semple C.A."/>
            <person name="Seno S."/>
            <person name="Sessa L."/>
            <person name="Sheng Y."/>
            <person name="Shibata Y."/>
            <person name="Shimada H."/>
            <person name="Shimada K."/>
            <person name="Silva D."/>
            <person name="Sinclair B."/>
            <person name="Sperling S."/>
            <person name="Stupka E."/>
            <person name="Sugiura K."/>
            <person name="Sultana R."/>
            <person name="Takenaka Y."/>
            <person name="Taki K."/>
            <person name="Tammoja K."/>
            <person name="Tan S.L."/>
            <person name="Tang S."/>
            <person name="Taylor M.S."/>
            <person name="Tegner J."/>
            <person name="Teichmann S.A."/>
            <person name="Ueda H.R."/>
            <person name="van Nimwegen E."/>
            <person name="Verardo R."/>
            <person name="Wei C.L."/>
            <person name="Yagi K."/>
            <person name="Yamanishi H."/>
            <person name="Zabarovsky E."/>
            <person name="Zhu S."/>
            <person name="Zimmer A."/>
            <person name="Hide W."/>
            <person name="Bult C."/>
            <person name="Grimmond S.M."/>
            <person name="Teasdale R.D."/>
            <person name="Liu E.T."/>
            <person name="Brusic V."/>
            <person name="Quackenbush J."/>
            <person name="Wahlestedt C."/>
            <person name="Mattick J.S."/>
            <person name="Hume D.A."/>
            <person name="Kai C."/>
            <person name="Sasaki D."/>
            <person name="Tomaru Y."/>
            <person name="Fukuda S."/>
            <person name="Kanamori-Katayama M."/>
            <person name="Suzuki M."/>
            <person name="Aoki J."/>
            <person name="Arakawa T."/>
            <person name="Iida J."/>
            <person name="Imamura K."/>
            <person name="Itoh M."/>
            <person name="Kato T."/>
            <person name="Kawaji H."/>
            <person name="Kawagashira N."/>
            <person name="Kawashima T."/>
            <person name="Kojima M."/>
            <person name="Kondo S."/>
            <person name="Konno H."/>
            <person name="Nakano K."/>
            <person name="Ninomiya N."/>
            <person name="Nishio T."/>
            <person name="Okada M."/>
            <person name="Plessy C."/>
            <person name="Shibata K."/>
            <person name="Shiraki T."/>
            <person name="Suzuki S."/>
            <person name="Tagami M."/>
            <person name="Waki K."/>
            <person name="Watahiki A."/>
            <person name="Okamura-Oho Y."/>
            <person name="Suzuki H."/>
            <person name="Kawai J."/>
            <person name="Hayashizaki Y."/>
        </authorList>
    </citation>
    <scope>NUCLEOTIDE SEQUENCE [LARGE SCALE MRNA]</scope>
    <source>
        <strain>C57BL/6J</strain>
        <tissue>Kidney</tissue>
    </source>
</reference>
<reference key="3">
    <citation type="journal article" date="2009" name="PLoS Biol.">
        <title>Lineage-specific biology revealed by a finished genome assembly of the mouse.</title>
        <authorList>
            <person name="Church D.M."/>
            <person name="Goodstadt L."/>
            <person name="Hillier L.W."/>
            <person name="Zody M.C."/>
            <person name="Goldstein S."/>
            <person name="She X."/>
            <person name="Bult C.J."/>
            <person name="Agarwala R."/>
            <person name="Cherry J.L."/>
            <person name="DiCuccio M."/>
            <person name="Hlavina W."/>
            <person name="Kapustin Y."/>
            <person name="Meric P."/>
            <person name="Maglott D."/>
            <person name="Birtle Z."/>
            <person name="Marques A.C."/>
            <person name="Graves T."/>
            <person name="Zhou S."/>
            <person name="Teague B."/>
            <person name="Potamousis K."/>
            <person name="Churas C."/>
            <person name="Place M."/>
            <person name="Herschleb J."/>
            <person name="Runnheim R."/>
            <person name="Forrest D."/>
            <person name="Amos-Landgraf J."/>
            <person name="Schwartz D.C."/>
            <person name="Cheng Z."/>
            <person name="Lindblad-Toh K."/>
            <person name="Eichler E.E."/>
            <person name="Ponting C.P."/>
        </authorList>
    </citation>
    <scope>NUCLEOTIDE SEQUENCE [LARGE SCALE GENOMIC DNA]</scope>
    <source>
        <strain>C57BL/6J</strain>
    </source>
</reference>
<reference key="4">
    <citation type="submission" date="2005-07" db="EMBL/GenBank/DDBJ databases">
        <authorList>
            <person name="Mural R.J."/>
            <person name="Adams M.D."/>
            <person name="Myers E.W."/>
            <person name="Smith H.O."/>
            <person name="Venter J.C."/>
        </authorList>
    </citation>
    <scope>NUCLEOTIDE SEQUENCE [LARGE SCALE GENOMIC DNA]</scope>
</reference>
<reference key="5">
    <citation type="journal article" date="2004" name="Genome Res.">
        <title>The status, quality, and expansion of the NIH full-length cDNA project: the Mammalian Gene Collection (MGC).</title>
        <authorList>
            <consortium name="The MGC Project Team"/>
        </authorList>
    </citation>
    <scope>NUCLEOTIDE SEQUENCE [LARGE SCALE MRNA]</scope>
</reference>
<reference key="6">
    <citation type="journal article" date="2006" name="Development">
        <title>Grainyhead-related transcription factor is required for duct maturation in the salivary gland and the kidney of the mouse.</title>
        <authorList>
            <person name="Yamaguchi Y."/>
            <person name="Yonemura S."/>
            <person name="Takada S."/>
        </authorList>
    </citation>
    <scope>FUNCTION</scope>
    <scope>TISSUE SPECIFICITY</scope>
    <scope>DEVELOPMENTAL STAGE</scope>
    <scope>DISRUPTION PHENOTYPE</scope>
</reference>
<reference key="7">
    <citation type="journal article" date="2013" name="EMBO J.">
        <title>Embryonic stem cell self-renewal pathways converge on the transcription factor Tfcp2l1.</title>
        <authorList>
            <person name="Ye S."/>
            <person name="Li P."/>
            <person name="Tong C."/>
            <person name="Ying Q.L."/>
        </authorList>
    </citation>
    <scope>FUNCTION</scope>
</reference>
<reference key="8">
    <citation type="journal article" date="2013" name="EMBO J.">
        <title>Identification of the missing pluripotency mediator downstream of leukaemia inhibitory factor.</title>
        <authorList>
            <person name="Martello G."/>
            <person name="Bertone P."/>
            <person name="Smith A."/>
        </authorList>
    </citation>
    <scope>FUNCTION</scope>
</reference>
<reference key="9">
    <citation type="journal article" date="2015" name="Stem Cell Reports">
        <title>Klf2 and Tfcp2l1, two Wnt/beta-catenin targets, act synergistically to induce and maintain naive pluripotency.</title>
        <authorList>
            <person name="Qiu D."/>
            <person name="Ye S."/>
            <person name="Ruiz B."/>
            <person name="Zhou X."/>
            <person name="Liu D."/>
            <person name="Zhang Q."/>
            <person name="Ying Q.L."/>
        </authorList>
    </citation>
    <scope>FUNCTION</scope>
</reference>
<reference key="10">
    <citation type="journal article" date="2017" name="Elife">
        <title>Transcription factor TFCP2L1 patterns cells in the mouse kidney collecting ducts.</title>
        <authorList>
            <person name="Werth M."/>
            <person name="Schmidt-Ott K.M."/>
            <person name="Leete T."/>
            <person name="Qiu A."/>
            <person name="Hinze C."/>
            <person name="Viltard M."/>
            <person name="Paragas N."/>
            <person name="Shawber C.J."/>
            <person name="Yu W."/>
            <person name="Lee P."/>
            <person name="Chen X."/>
            <person name="Sarkar A."/>
            <person name="Mu W."/>
            <person name="Rittenberg A."/>
            <person name="Lin C.S."/>
            <person name="Kitajewski J."/>
            <person name="Al-Awqati Q."/>
            <person name="Barasch J."/>
        </authorList>
    </citation>
    <scope>FUNCTION</scope>
    <scope>TISSUE SPECIFICITY</scope>
    <scope>SUBCELLULAR LOCATION</scope>
</reference>
<reference key="11">
    <citation type="journal article" date="2017" name="J. Cell Sci.">
        <title>Tfcp2l1 represses multiple lineage commitment of mouse embryonic stem cells through MTA1 and LEF1.</title>
        <authorList>
            <person name="Liu K."/>
            <person name="Zhang Y."/>
            <person name="Liu D."/>
            <person name="Ying Q.L."/>
            <person name="Ye S."/>
        </authorList>
    </citation>
    <scope>FUNCTION</scope>
    <scope>DISRUPTION PHENOTYPE</scope>
    <scope>DOMAIN</scope>
    <scope>INTERACTION WITH MTA1</scope>
</reference>
<protein>
    <recommendedName>
        <fullName>Transcription factor CP2-like protein 1</fullName>
    </recommendedName>
    <alternativeName>
        <fullName>CP2-related transcriptional repressor 1</fullName>
        <shortName>CRTR-1</shortName>
    </alternativeName>
</protein>
<proteinExistence type="evidence at protein level"/>
<evidence type="ECO:0000250" key="1">
    <source>
        <dbReference type="UniProtKB" id="Q9NZI6"/>
    </source>
</evidence>
<evidence type="ECO:0000255" key="2">
    <source>
        <dbReference type="PROSITE-ProRule" id="PRU01313"/>
    </source>
</evidence>
<evidence type="ECO:0000256" key="3">
    <source>
        <dbReference type="SAM" id="MobiDB-lite"/>
    </source>
</evidence>
<evidence type="ECO:0000269" key="4">
    <source>
    </source>
</evidence>
<evidence type="ECO:0000269" key="5">
    <source>
    </source>
</evidence>
<evidence type="ECO:0000269" key="6">
    <source>
    </source>
</evidence>
<evidence type="ECO:0000269" key="7">
    <source>
    </source>
</evidence>
<evidence type="ECO:0000269" key="8">
    <source>
    </source>
</evidence>
<evidence type="ECO:0000269" key="9">
    <source>
    </source>
</evidence>
<evidence type="ECO:0000269" key="10">
    <source>
    </source>
</evidence>
<evidence type="ECO:0000305" key="11"/>
<accession>Q3UNW5</accession>
<accession>Q14AW3</accession>
<accession>Q99PF2</accession>
<name>TF2L1_MOUSE</name>
<comment type="function">
    <text evidence="1 4 5 6 7 8 9">Transcription factor that facilitates establishment and maintenance of pluripotency in embryonic stem cells (ESCs) (PubMed:23942233, PubMed:26321140). With Klf2, acts as the major effector of self-renewal that mediates induction of pluripotency downstream of LIF/Stat3 and Wnt/beta-catenin signaling (PubMed:23942233, PubMed:23942238, PubMed:26321140). Required for normal duct development in the salivary gland and kidney (PubMed:17079272). Coordinates the development of the kidney collecting ducts intercalated (IC) and principal (PC) cells, which regulate acid-base and salt-water homeostasis, respectively (PubMed:28577314). Regulates the expression of IC genes including subunits B1 and D2 of the V-ATPase complex, Oxgr1, Ca12, Slc4a1, Aqp6 and IC-specific transcription factor Foxi1 (PubMed:28577314). Also regulates the expression of Jag1 and subsequent notch signaling in the collecting duct (PubMed:28577314). Jag1 initiates notch signaling in PCs but inhibits notch signaling in ICs (PubMed:28577314). Acts as a transcriptional suppressor that may suppress UBP1-mediated transcriptional activation (PubMed:11073954). Modulates the placental expression of CYP11A1 (By similarity).</text>
</comment>
<comment type="subunit">
    <text evidence="1 10">Forms homohexamers via its SAM-like domain (By similarity). Interacts with Mta1; which is indispensable for Tfcp2l1-mediated self-renewal-promoting effect and endoderm-inhibiting action (PubMed:28982712).</text>
</comment>
<comment type="interaction">
    <interactant intactId="EBI-5691372">
        <id>Q3UNW5</id>
    </interactant>
    <interactant intactId="EBI-2312731">
        <id>Q61539</id>
        <label>Esrrb</label>
    </interactant>
    <organismsDiffer>false</organismsDiffer>
    <experiments>4</experiments>
</comment>
<comment type="subcellular location">
    <subcellularLocation>
        <location evidence="9">Nucleus</location>
    </subcellularLocation>
</comment>
<comment type="tissue specificity">
    <text evidence="4 5 9">Highly expressed in placenta, testis, small intestine, kidney and stomach (PubMed:11073954, PubMed:17079272). Low levels of expression in lung, mesenteric lymph nodes, muscle, ovary, and thymus (PubMed:11073954). No expression was detected in brain, heart, liver, and spleen (PubMed:11073954). Expressed in eccrine glands in the palm (PubMed:11073954). Expression is prominent in both kidney collecting ducts intercalated (IC) and principal (PC) cells (PubMed:28577314). Also expressed in the thick limb of Henle and connecting segments of the nephron (PubMed:28577314).</text>
</comment>
<comment type="developmental stage">
    <text evidence="4 5">Expressed at low levels in 10.5- and 11.5-dpc embryos. Expression was not detected at 12.5- and 13.5-dpc. Highly expressed in the epithelial monolayer lining in a subset of tubules of embryonic kidney cortex. Low levels of expression were detected in 16.5-dpc embryonic intestine, limb, lung, and skin. No expression was detected in the brain. Expression is regulated in at least two distinct sites, the pluripotent cells of the developing embryo and the epithelial cells lining the embryonic kidney distal convoluted tubules. Expressed in the ducts of submandibular and sublingual glands, isolated submandibular gland, parotid and lachrymal glands and nasal gland in 16 dpc embryos. At birth, the expression is detected in minor nasal glands in the olfactory epithelium, ducts of the mammary gland, male reproductive system, endolymphatic sac and lung. Expressed during renal development; first detected in the ureteric epithelium, at the distal end of the S-shaped body in nephron and subsequently in all nephric tubule, with expression localizing to more distal regions in the nephron during the maturation of the kidney.</text>
</comment>
<comment type="domain">
    <text evidence="1 10">The Grh/CP2 DB domain is required for direct DNA-binding (By similarity). The Grh/CP2 DB domain is essential to maintain the undifferentiated state of embryonic stem cells (PubMed:28982712).</text>
</comment>
<comment type="domain">
    <text evidence="1">The SAM-like domain is required for homohexamerization (By similarity).</text>
</comment>
<comment type="disruption phenotype">
    <text evidence="5 10">Approximately half of the mutant mice die before weaning and show growth retardation during early postnatal stages. Mice display defects in the morphology of the submandibular ducts, abnormalities in the maturation of renal tubules and abnormal composition of saliva and urine (PubMed:17079272). Leads to a decrease in the expression of pluripotency genes (Nanog, Oct4, Sox2 and Esrrb), while resulted in up-regulation of some endoderm (Sox17, Gata4 and Gata6), mesoderm (T and Mixl1) and trophectoderm (Cdx2, Eomes, and Elf5) markers (PubMed:28982712).</text>
</comment>
<comment type="similarity">
    <text evidence="11">Belongs to the grh/CP2 family. CP2 subfamily.</text>
</comment>
<sequence length="479" mass="54737">MLFWHTQPEHYNQHNSGSYLRDVLALPIFKQEEPQLSPENGARLPPLQYVLCAATSPAVKLHEETLTYLNQGQSYEIRLLENRKLGDFQDLNTKYVKSIIRVVFHDRRLQYTEYQQLEGWRWSRPGDRILDIDIPLSVGILDPRASPTQLNAVEFLWDPSKRASAFIQVHCISTEFTPRKHGGEKGVPFRVQIDTFKQNESGDYSEHLHSASCQIKVFKPKGADRKQKTDREKMEKRTAQEKEKYQPSYETTILTECSPWPDVPYQANNTPSPSYNGSPNSFGLREGNSSPNHPVEPLPLGSDHLLPSASIQDAQQWLHRNRFSQFCWLFASFSGADLLKMSRDDLVQVCGPADGIRLFNAIKGRNVRPKMTIYVCQELEQNQLPLPQKQDDSGDNSLCVYHAIFLEELTTLELTEKIASLYSIPPQHIHRVYRQGPAGIHVVVSNEMVQNFQDESCFILSTLKAESNDGYHIILKCGL</sequence>
<organism>
    <name type="scientific">Mus musculus</name>
    <name type="common">Mouse</name>
    <dbReference type="NCBI Taxonomy" id="10090"/>
    <lineage>
        <taxon>Eukaryota</taxon>
        <taxon>Metazoa</taxon>
        <taxon>Chordata</taxon>
        <taxon>Craniata</taxon>
        <taxon>Vertebrata</taxon>
        <taxon>Euteleostomi</taxon>
        <taxon>Mammalia</taxon>
        <taxon>Eutheria</taxon>
        <taxon>Euarchontoglires</taxon>
        <taxon>Glires</taxon>
        <taxon>Rodentia</taxon>
        <taxon>Myomorpha</taxon>
        <taxon>Muroidea</taxon>
        <taxon>Muridae</taxon>
        <taxon>Murinae</taxon>
        <taxon>Mus</taxon>
        <taxon>Mus</taxon>
    </lineage>
</organism>
<keyword id="KW-0238">DNA-binding</keyword>
<keyword id="KW-0539">Nucleus</keyword>
<keyword id="KW-1185">Reference proteome</keyword>
<keyword id="KW-0804">Transcription</keyword>
<keyword id="KW-0805">Transcription regulation</keyword>